<keyword id="KW-0272">Extracellular matrix</keyword>
<keyword id="KW-1185">Reference proteome</keyword>
<keyword id="KW-0964">Secreted</keyword>
<keyword id="KW-0732">Signal</keyword>
<reference key="1">
    <citation type="journal article" date="2005" name="Science">
        <title>The transcriptional landscape of the mammalian genome.</title>
        <authorList>
            <person name="Carninci P."/>
            <person name="Kasukawa T."/>
            <person name="Katayama S."/>
            <person name="Gough J."/>
            <person name="Frith M.C."/>
            <person name="Maeda N."/>
            <person name="Oyama R."/>
            <person name="Ravasi T."/>
            <person name="Lenhard B."/>
            <person name="Wells C."/>
            <person name="Kodzius R."/>
            <person name="Shimokawa K."/>
            <person name="Bajic V.B."/>
            <person name="Brenner S.E."/>
            <person name="Batalov S."/>
            <person name="Forrest A.R."/>
            <person name="Zavolan M."/>
            <person name="Davis M.J."/>
            <person name="Wilming L.G."/>
            <person name="Aidinis V."/>
            <person name="Allen J.E."/>
            <person name="Ambesi-Impiombato A."/>
            <person name="Apweiler R."/>
            <person name="Aturaliya R.N."/>
            <person name="Bailey T.L."/>
            <person name="Bansal M."/>
            <person name="Baxter L."/>
            <person name="Beisel K.W."/>
            <person name="Bersano T."/>
            <person name="Bono H."/>
            <person name="Chalk A.M."/>
            <person name="Chiu K.P."/>
            <person name="Choudhary V."/>
            <person name="Christoffels A."/>
            <person name="Clutterbuck D.R."/>
            <person name="Crowe M.L."/>
            <person name="Dalla E."/>
            <person name="Dalrymple B.P."/>
            <person name="de Bono B."/>
            <person name="Della Gatta G."/>
            <person name="di Bernardo D."/>
            <person name="Down T."/>
            <person name="Engstrom P."/>
            <person name="Fagiolini M."/>
            <person name="Faulkner G."/>
            <person name="Fletcher C.F."/>
            <person name="Fukushima T."/>
            <person name="Furuno M."/>
            <person name="Futaki S."/>
            <person name="Gariboldi M."/>
            <person name="Georgii-Hemming P."/>
            <person name="Gingeras T.R."/>
            <person name="Gojobori T."/>
            <person name="Green R.E."/>
            <person name="Gustincich S."/>
            <person name="Harbers M."/>
            <person name="Hayashi Y."/>
            <person name="Hensch T.K."/>
            <person name="Hirokawa N."/>
            <person name="Hill D."/>
            <person name="Huminiecki L."/>
            <person name="Iacono M."/>
            <person name="Ikeo K."/>
            <person name="Iwama A."/>
            <person name="Ishikawa T."/>
            <person name="Jakt M."/>
            <person name="Kanapin A."/>
            <person name="Katoh M."/>
            <person name="Kawasawa Y."/>
            <person name="Kelso J."/>
            <person name="Kitamura H."/>
            <person name="Kitano H."/>
            <person name="Kollias G."/>
            <person name="Krishnan S.P."/>
            <person name="Kruger A."/>
            <person name="Kummerfeld S.K."/>
            <person name="Kurochkin I.V."/>
            <person name="Lareau L.F."/>
            <person name="Lazarevic D."/>
            <person name="Lipovich L."/>
            <person name="Liu J."/>
            <person name="Liuni S."/>
            <person name="McWilliam S."/>
            <person name="Madan Babu M."/>
            <person name="Madera M."/>
            <person name="Marchionni L."/>
            <person name="Matsuda H."/>
            <person name="Matsuzawa S."/>
            <person name="Miki H."/>
            <person name="Mignone F."/>
            <person name="Miyake S."/>
            <person name="Morris K."/>
            <person name="Mottagui-Tabar S."/>
            <person name="Mulder N."/>
            <person name="Nakano N."/>
            <person name="Nakauchi H."/>
            <person name="Ng P."/>
            <person name="Nilsson R."/>
            <person name="Nishiguchi S."/>
            <person name="Nishikawa S."/>
            <person name="Nori F."/>
            <person name="Ohara O."/>
            <person name="Okazaki Y."/>
            <person name="Orlando V."/>
            <person name="Pang K.C."/>
            <person name="Pavan W.J."/>
            <person name="Pavesi G."/>
            <person name="Pesole G."/>
            <person name="Petrovsky N."/>
            <person name="Piazza S."/>
            <person name="Reed J."/>
            <person name="Reid J.F."/>
            <person name="Ring B.Z."/>
            <person name="Ringwald M."/>
            <person name="Rost B."/>
            <person name="Ruan Y."/>
            <person name="Salzberg S.L."/>
            <person name="Sandelin A."/>
            <person name="Schneider C."/>
            <person name="Schoenbach C."/>
            <person name="Sekiguchi K."/>
            <person name="Semple C.A."/>
            <person name="Seno S."/>
            <person name="Sessa L."/>
            <person name="Sheng Y."/>
            <person name="Shibata Y."/>
            <person name="Shimada H."/>
            <person name="Shimada K."/>
            <person name="Silva D."/>
            <person name="Sinclair B."/>
            <person name="Sperling S."/>
            <person name="Stupka E."/>
            <person name="Sugiura K."/>
            <person name="Sultana R."/>
            <person name="Takenaka Y."/>
            <person name="Taki K."/>
            <person name="Tammoja K."/>
            <person name="Tan S.L."/>
            <person name="Tang S."/>
            <person name="Taylor M.S."/>
            <person name="Tegner J."/>
            <person name="Teichmann S.A."/>
            <person name="Ueda H.R."/>
            <person name="van Nimwegen E."/>
            <person name="Verardo R."/>
            <person name="Wei C.L."/>
            <person name="Yagi K."/>
            <person name="Yamanishi H."/>
            <person name="Zabarovsky E."/>
            <person name="Zhu S."/>
            <person name="Zimmer A."/>
            <person name="Hide W."/>
            <person name="Bult C."/>
            <person name="Grimmond S.M."/>
            <person name="Teasdale R.D."/>
            <person name="Liu E.T."/>
            <person name="Brusic V."/>
            <person name="Quackenbush J."/>
            <person name="Wahlestedt C."/>
            <person name="Mattick J.S."/>
            <person name="Hume D.A."/>
            <person name="Kai C."/>
            <person name="Sasaki D."/>
            <person name="Tomaru Y."/>
            <person name="Fukuda S."/>
            <person name="Kanamori-Katayama M."/>
            <person name="Suzuki M."/>
            <person name="Aoki J."/>
            <person name="Arakawa T."/>
            <person name="Iida J."/>
            <person name="Imamura K."/>
            <person name="Itoh M."/>
            <person name="Kato T."/>
            <person name="Kawaji H."/>
            <person name="Kawagashira N."/>
            <person name="Kawashima T."/>
            <person name="Kojima M."/>
            <person name="Kondo S."/>
            <person name="Konno H."/>
            <person name="Nakano K."/>
            <person name="Ninomiya N."/>
            <person name="Nishio T."/>
            <person name="Okada M."/>
            <person name="Plessy C."/>
            <person name="Shibata K."/>
            <person name="Shiraki T."/>
            <person name="Suzuki S."/>
            <person name="Tagami M."/>
            <person name="Waki K."/>
            <person name="Watahiki A."/>
            <person name="Okamura-Oho Y."/>
            <person name="Suzuki H."/>
            <person name="Kawai J."/>
            <person name="Hayashizaki Y."/>
        </authorList>
    </citation>
    <scope>NUCLEOTIDE SEQUENCE [LARGE SCALE MRNA]</scope>
    <source>
        <strain>C57BL/6J</strain>
        <tissue>Vagina</tissue>
    </source>
</reference>
<reference key="2">
    <citation type="journal article" date="2004" name="Genome Res.">
        <title>The status, quality, and expansion of the NIH full-length cDNA project: the Mammalian Gene Collection (MGC).</title>
        <authorList>
            <consortium name="The MGC Project Team"/>
        </authorList>
    </citation>
    <scope>NUCLEOTIDE SEQUENCE [LARGE SCALE MRNA]</scope>
</reference>
<reference key="3">
    <citation type="journal article" date="2008" name="Proc. Natl. Acad. Sci. U.S.A.">
        <title>Transcriptome-based systematic identification of extracellular matrix proteins.</title>
        <authorList>
            <person name="Manabe R."/>
            <person name="Tsutsui K."/>
            <person name="Yamada T."/>
            <person name="Kimura M."/>
            <person name="Nakano I."/>
            <person name="Shimono C."/>
            <person name="Sanzen N."/>
            <person name="Furutani Y."/>
            <person name="Fukuda T."/>
            <person name="Oguri Y."/>
            <person name="Shimamoto K."/>
            <person name="Kiyozumi D."/>
            <person name="Sato Y."/>
            <person name="Sado Y."/>
            <person name="Senoo H."/>
            <person name="Yamashina S."/>
            <person name="Fukuda S."/>
            <person name="Kawai J."/>
            <person name="Sugiura N."/>
            <person name="Kimata K."/>
            <person name="Hayashizaki Y."/>
            <person name="Sekiguchi K."/>
        </authorList>
    </citation>
    <scope>SUBCELLULAR LOCATION</scope>
    <scope>SUBUNIT</scope>
    <scope>DEVELOPMENTAL STAGE</scope>
</reference>
<accession>Q8BM15</accession>
<accession>Q3KNI3</accession>
<accession>Q3KNI4</accession>
<sequence>MQSHAGGSRAPLGLLLICLCLPGLFARSTGAPEEKASPHSGQPSFTSLLNPGQPQPKPDPVNNELLGVLPRLSESPQDGALPEGGSEVPNGPPFWGPPPMESWPSEDPQQGMAAVAEDQLEQMLPEALPYLSRGGRLPEASSARLRQPSLAASYPQDSEAGLQPGSSSLETEAEAFARSPFWFLIHKLLPGSSGRILRPGTSWGSGGAGTGWGTRPMPYPSGIWGSNGLVSGTSLGGRGPYPVRIWGRNGWYPLRILGGNGRYPPVGTWGGYGQYPPVGTWGGYGQYPPVGPWGGYGQYPPVGTWGANCQYPAGSRRPNCRYPAGSWGTKGQNRLPPGAKRPGSSGITP</sequence>
<gene>
    <name type="primary">Stg</name>
</gene>
<organism>
    <name type="scientific">Mus musculus</name>
    <name type="common">Mouse</name>
    <dbReference type="NCBI Taxonomy" id="10090"/>
    <lineage>
        <taxon>Eukaryota</taxon>
        <taxon>Metazoa</taxon>
        <taxon>Chordata</taxon>
        <taxon>Craniata</taxon>
        <taxon>Vertebrata</taxon>
        <taxon>Euteleostomi</taxon>
        <taxon>Mammalia</taxon>
        <taxon>Eutheria</taxon>
        <taxon>Euarchontoglires</taxon>
        <taxon>Glires</taxon>
        <taxon>Rodentia</taxon>
        <taxon>Myomorpha</taxon>
        <taxon>Muroidea</taxon>
        <taxon>Muridae</taxon>
        <taxon>Murinae</taxon>
        <taxon>Mus</taxon>
        <taxon>Mus</taxon>
    </lineage>
</organism>
<feature type="signal peptide" evidence="1">
    <location>
        <begin position="1"/>
        <end position="26"/>
    </location>
</feature>
<feature type="chain" id="PRO_0000363883" description="Uncharacterized protein C6orf15 homolog">
    <location>
        <begin position="27"/>
        <end position="349"/>
    </location>
</feature>
<feature type="region of interest" description="Disordered" evidence="2">
    <location>
        <begin position="30"/>
        <end position="113"/>
    </location>
</feature>
<feature type="region of interest" description="Disordered" evidence="2">
    <location>
        <begin position="322"/>
        <end position="349"/>
    </location>
</feature>
<feature type="compositionally biased region" description="Polar residues" evidence="2">
    <location>
        <begin position="39"/>
        <end position="52"/>
    </location>
</feature>
<feature type="compositionally biased region" description="Pro residues" evidence="2">
    <location>
        <begin position="90"/>
        <end position="101"/>
    </location>
</feature>
<feature type="sequence conflict" description="In Ref. 2; AAI07267." evidence="4" ref="2">
    <original>R</original>
    <variation>W</variation>
    <location>
        <position position="144"/>
    </location>
</feature>
<feature type="sequence conflict" description="In Ref. 2; AAI07267." evidence="4" ref="2">
    <original>L</original>
    <variation>P</variation>
    <location>
        <position position="150"/>
    </location>
</feature>
<feature type="sequence conflict" description="In Ref. 2; AAI07267." evidence="4" ref="2">
    <original>T</original>
    <variation>P</variation>
    <location>
        <position position="280"/>
    </location>
</feature>
<comment type="subunit">
    <text evidence="3">Binds to numerous extracellular matrix proteins.</text>
</comment>
<comment type="subcellular location">
    <subcellularLocation>
        <location evidence="3">Secreted</location>
        <location evidence="3">Extracellular space</location>
        <location evidence="3">Extracellular matrix</location>
    </subcellularLocation>
</comment>
<comment type="developmental stage">
    <text evidence="3">At 16.5 dpc, present in rib cartilage (at protein level).</text>
</comment>
<evidence type="ECO:0000255" key="1"/>
<evidence type="ECO:0000256" key="2">
    <source>
        <dbReference type="SAM" id="MobiDB-lite"/>
    </source>
</evidence>
<evidence type="ECO:0000269" key="3">
    <source>
    </source>
</evidence>
<evidence type="ECO:0000305" key="4"/>
<proteinExistence type="evidence at protein level"/>
<protein>
    <recommendedName>
        <fullName>Uncharacterized protein C6orf15 homolog</fullName>
    </recommendedName>
    <alternativeName>
        <fullName>Extracellular matrix protein with prion homology</fullName>
        <shortName>Emprin</shortName>
    </alternativeName>
    <alternativeName>
        <fullName>Protein STG</fullName>
    </alternativeName>
</protein>
<name>CF015_MOUSE</name>
<dbReference type="EMBL" id="AK037046">
    <property type="protein sequence ID" value="BAC29684.1"/>
    <property type="molecule type" value="mRNA"/>
</dbReference>
<dbReference type="EMBL" id="BC107265">
    <property type="protein sequence ID" value="AAI07266.1"/>
    <property type="molecule type" value="mRNA"/>
</dbReference>
<dbReference type="EMBL" id="BC107266">
    <property type="protein sequence ID" value="AAI07267.1"/>
    <property type="molecule type" value="mRNA"/>
</dbReference>
<dbReference type="CCDS" id="CCDS50092.1"/>
<dbReference type="RefSeq" id="NP_780357.1">
    <property type="nucleotide sequence ID" value="NM_175148.3"/>
</dbReference>
<dbReference type="FunCoup" id="Q8BM15">
    <property type="interactions" value="23"/>
</dbReference>
<dbReference type="STRING" id="10090.ENSMUSP00000038043"/>
<dbReference type="GlyGen" id="Q8BM15">
    <property type="glycosylation" value="1 site, 1 O-linked glycan (1 site)"/>
</dbReference>
<dbReference type="PaxDb" id="10090-ENSMUSP00000038043"/>
<dbReference type="ProteomicsDB" id="281387"/>
<dbReference type="Antibodypedia" id="653">
    <property type="antibodies" value="19 antibodies from 12 providers"/>
</dbReference>
<dbReference type="DNASU" id="69542"/>
<dbReference type="Ensembl" id="ENSMUST00000044326.5">
    <property type="protein sequence ID" value="ENSMUSP00000038043.5"/>
    <property type="gene ID" value="ENSMUSG00000039269.6"/>
</dbReference>
<dbReference type="GeneID" id="69542"/>
<dbReference type="KEGG" id="mmu:69542"/>
<dbReference type="UCSC" id="uc008cib.1">
    <property type="organism name" value="mouse"/>
</dbReference>
<dbReference type="AGR" id="MGI:1916792"/>
<dbReference type="MGI" id="MGI:1916792">
    <property type="gene designation" value="2300002M23Rik"/>
</dbReference>
<dbReference type="VEuPathDB" id="HostDB:ENSMUSG00000039269"/>
<dbReference type="eggNOG" id="ENOG502SDN4">
    <property type="taxonomic scope" value="Eukaryota"/>
</dbReference>
<dbReference type="GeneTree" id="ENSGT00390000010291"/>
<dbReference type="HOGENOM" id="CLU_919928_0_0_1"/>
<dbReference type="InParanoid" id="Q8BM15"/>
<dbReference type="OMA" id="WPSEDPW"/>
<dbReference type="OrthoDB" id="9446516at2759"/>
<dbReference type="PhylomeDB" id="Q8BM15"/>
<dbReference type="TreeFam" id="TF338298"/>
<dbReference type="BioGRID-ORCS" id="69542">
    <property type="hits" value="2 hits in 78 CRISPR screens"/>
</dbReference>
<dbReference type="PRO" id="PR:Q8BM15"/>
<dbReference type="Proteomes" id="UP000000589">
    <property type="component" value="Chromosome 17"/>
</dbReference>
<dbReference type="RNAct" id="Q8BM15">
    <property type="molecule type" value="protein"/>
</dbReference>
<dbReference type="Bgee" id="ENSMUSG00000039269">
    <property type="expression patterns" value="Expressed in esophagus and 36 other cell types or tissues"/>
</dbReference>
<dbReference type="GO" id="GO:0031012">
    <property type="term" value="C:extracellular matrix"/>
    <property type="evidence" value="ECO:0000314"/>
    <property type="project" value="MGI"/>
</dbReference>
<dbReference type="GO" id="GO:0005576">
    <property type="term" value="C:extracellular region"/>
    <property type="evidence" value="ECO:0007669"/>
    <property type="project" value="UniProtKB-KW"/>
</dbReference>
<dbReference type="GO" id="GO:0005614">
    <property type="term" value="C:interstitial matrix"/>
    <property type="evidence" value="ECO:0000314"/>
    <property type="project" value="MGI"/>
</dbReference>
<dbReference type="GO" id="GO:0005518">
    <property type="term" value="F:collagen binding"/>
    <property type="evidence" value="ECO:0000314"/>
    <property type="project" value="MGI"/>
</dbReference>
<dbReference type="GO" id="GO:0070052">
    <property type="term" value="F:collagen V binding"/>
    <property type="evidence" value="ECO:0000314"/>
    <property type="project" value="MGI"/>
</dbReference>
<dbReference type="GO" id="GO:0001968">
    <property type="term" value="F:fibronectin binding"/>
    <property type="evidence" value="ECO:0000314"/>
    <property type="project" value="MGI"/>
</dbReference>
<dbReference type="GO" id="GO:0005539">
    <property type="term" value="F:glycosaminoglycan binding"/>
    <property type="evidence" value="ECO:0000314"/>
    <property type="project" value="MGI"/>
</dbReference>
<dbReference type="GO" id="GO:0008201">
    <property type="term" value="F:heparin binding"/>
    <property type="evidence" value="ECO:0000314"/>
    <property type="project" value="MGI"/>
</dbReference>
<dbReference type="GO" id="GO:0005540">
    <property type="term" value="F:hyaluronic acid binding"/>
    <property type="evidence" value="ECO:0000314"/>
    <property type="project" value="MGI"/>
</dbReference>
<dbReference type="GO" id="GO:0043236">
    <property type="term" value="F:laminin binding"/>
    <property type="evidence" value="ECO:0000314"/>
    <property type="project" value="MGI"/>
</dbReference>
<dbReference type="GO" id="GO:0030198">
    <property type="term" value="P:extracellular matrix organization"/>
    <property type="evidence" value="ECO:0000314"/>
    <property type="project" value="MGI"/>
</dbReference>
<dbReference type="InterPro" id="IPR026135">
    <property type="entry name" value="C6orf15"/>
</dbReference>
<dbReference type="PANTHER" id="PTHR15817:SF2">
    <property type="entry name" value="SIMILAR TO RIKEN CDNA 2300002M23"/>
    <property type="match status" value="1"/>
</dbReference>
<dbReference type="PANTHER" id="PTHR15817">
    <property type="entry name" value="STG PROTEIN"/>
    <property type="match status" value="1"/>
</dbReference>
<dbReference type="Pfam" id="PF15809">
    <property type="entry name" value="STG"/>
    <property type="match status" value="1"/>
</dbReference>